<comment type="function">
    <text evidence="2">May regulate immune response to the intracellular capsid in acting as a T-cell tolerogen, by having an immunoregulatory effect which prevents destruction of infected cells by cytotoxic T-cells. This immune regulation may predispose to chronicity during perinatal infections and prevent severe liver injury during adult infections.</text>
</comment>
<comment type="subunit">
    <text evidence="2">Homodimerizes.</text>
</comment>
<comment type="subcellular location">
    <subcellularLocation>
        <location evidence="2">Secreted</location>
    </subcellularLocation>
    <subcellularLocation>
        <location evidence="2">Host nucleus</location>
    </subcellularLocation>
</comment>
<comment type="alternative products">
    <event type="alternative initiation"/>
    <isoform>
        <id>P17099-1</id>
        <name>External core antigen</name>
        <sequence type="displayed"/>
    </isoform>
    <isoform>
        <id>P0C693-1</id>
        <name>Capsid protein</name>
        <sequence type="external"/>
    </isoform>
</comment>
<comment type="PTM">
    <text evidence="2">Phosphorylated.</text>
</comment>
<comment type="PTM">
    <text evidence="2">Cleaved by host furin.</text>
</comment>
<comment type="similarity">
    <text evidence="2">Belongs to the orthohepadnavirus precore antigen family.</text>
</comment>
<accession>P17099</accession>
<dbReference type="EMBL" id="X51970">
    <property type="protein sequence ID" value="CAA36232.1"/>
    <property type="molecule type" value="Genomic_DNA"/>
</dbReference>
<dbReference type="PIR" id="S10381">
    <property type="entry name" value="NKVLKS"/>
</dbReference>
<dbReference type="SMR" id="P17099"/>
<dbReference type="Proteomes" id="UP000007907">
    <property type="component" value="Segment"/>
</dbReference>
<dbReference type="GO" id="GO:0005576">
    <property type="term" value="C:extracellular region"/>
    <property type="evidence" value="ECO:0007669"/>
    <property type="project" value="UniProtKB-SubCell"/>
</dbReference>
<dbReference type="GO" id="GO:0043657">
    <property type="term" value="C:host cell"/>
    <property type="evidence" value="ECO:0007669"/>
    <property type="project" value="GOC"/>
</dbReference>
<dbReference type="GO" id="GO:0030430">
    <property type="term" value="C:host cell cytoplasm"/>
    <property type="evidence" value="ECO:0007669"/>
    <property type="project" value="UniProtKB-UniRule"/>
</dbReference>
<dbReference type="GO" id="GO:0042025">
    <property type="term" value="C:host cell nucleus"/>
    <property type="evidence" value="ECO:0007669"/>
    <property type="project" value="UniProtKB-SubCell"/>
</dbReference>
<dbReference type="GO" id="GO:0039619">
    <property type="term" value="C:T=4 icosahedral viral capsid"/>
    <property type="evidence" value="ECO:0007669"/>
    <property type="project" value="UniProtKB-UniRule"/>
</dbReference>
<dbReference type="GO" id="GO:0003677">
    <property type="term" value="F:DNA binding"/>
    <property type="evidence" value="ECO:0007669"/>
    <property type="project" value="UniProtKB-UniRule"/>
</dbReference>
<dbReference type="GO" id="GO:0003723">
    <property type="term" value="F:RNA binding"/>
    <property type="evidence" value="ECO:0007669"/>
    <property type="project" value="UniProtKB-UniRule"/>
</dbReference>
<dbReference type="GO" id="GO:0005198">
    <property type="term" value="F:structural molecule activity"/>
    <property type="evidence" value="ECO:0007669"/>
    <property type="project" value="UniProtKB-UniRule"/>
</dbReference>
<dbReference type="GO" id="GO:0075521">
    <property type="term" value="P:microtubule-dependent intracellular transport of viral material towards nucleus"/>
    <property type="evidence" value="ECO:0007669"/>
    <property type="project" value="UniProtKB-UniRule"/>
</dbReference>
<dbReference type="GO" id="GO:0046718">
    <property type="term" value="P:symbiont entry into host cell"/>
    <property type="evidence" value="ECO:0007669"/>
    <property type="project" value="UniProtKB-UniRule"/>
</dbReference>
<dbReference type="GO" id="GO:0075732">
    <property type="term" value="P:viral penetration into host nucleus"/>
    <property type="evidence" value="ECO:0007669"/>
    <property type="project" value="UniProtKB-UniRule"/>
</dbReference>
<dbReference type="FunFam" id="1.10.4090.10:FF:000001">
    <property type="entry name" value="Capsid protein"/>
    <property type="match status" value="1"/>
</dbReference>
<dbReference type="Gene3D" id="1.10.4090.10">
    <property type="entry name" value="Viral capsid, core domain supefamily, Hepatitis B virus"/>
    <property type="match status" value="1"/>
</dbReference>
<dbReference type="HAMAP" id="MF_04076">
    <property type="entry name" value="HBV_HBEAG"/>
    <property type="match status" value="1"/>
</dbReference>
<dbReference type="InterPro" id="IPR013195">
    <property type="entry name" value="Hepatitis_B_virus_capsid_N"/>
</dbReference>
<dbReference type="InterPro" id="IPR002006">
    <property type="entry name" value="Hepatitis_core"/>
</dbReference>
<dbReference type="InterPro" id="IPR036459">
    <property type="entry name" value="Viral_capsid_core_dom_sf_HBV"/>
</dbReference>
<dbReference type="Pfam" id="PF08290">
    <property type="entry name" value="Hep_core_N"/>
    <property type="match status" value="1"/>
</dbReference>
<dbReference type="Pfam" id="PF00906">
    <property type="entry name" value="Hepatitis_core"/>
    <property type="match status" value="2"/>
</dbReference>
<dbReference type="SUPFAM" id="SSF47852">
    <property type="entry name" value="Hepatitis B viral capsid (hbcag)"/>
    <property type="match status" value="1"/>
</dbReference>
<sequence>MQLFHLCLIISCTCPTVQASKLCLGWLWGMDIDPYKEFGATVELLSFLPSDFFPSVRDLLDTASALYREALESPEHCSPHHTALRQAILCWGELMTLATWVGNNLEDPASRDLVVNYVNTNMGLKIRQLLWFRISYLTFGRETVLEYLVSFGVWIRTPPAYRPPNAPILSTLPETTVVRRRDRGRSPRRRTPSPRRRRSQSPRRRRSQSRESQC</sequence>
<organism>
    <name type="scientific">Hepatitis B virus genotype A2 subtype adw2 (isolate Germany/991/1990)</name>
    <name type="common">HBV-A</name>
    <dbReference type="NCBI Taxonomy" id="10410"/>
    <lineage>
        <taxon>Viruses</taxon>
        <taxon>Riboviria</taxon>
        <taxon>Pararnavirae</taxon>
        <taxon>Artverviricota</taxon>
        <taxon>Revtraviricetes</taxon>
        <taxon>Blubervirales</taxon>
        <taxon>Hepadnaviridae</taxon>
        <taxon>Orthohepadnavirus</taxon>
        <taxon>Hepatitis B virus</taxon>
    </lineage>
</organism>
<keyword id="KW-0024">Alternative initiation</keyword>
<keyword id="KW-1015">Disulfide bond</keyword>
<keyword id="KW-1048">Host nucleus</keyword>
<keyword id="KW-0945">Host-virus interaction</keyword>
<keyword id="KW-0677">Repeat</keyword>
<keyword id="KW-0964">Secreted</keyword>
<keyword id="KW-0732">Signal</keyword>
<keyword id="KW-0899">Viral immunoevasion</keyword>
<organismHost>
    <name type="scientific">Homo sapiens</name>
    <name type="common">Human</name>
    <dbReference type="NCBI Taxonomy" id="9606"/>
</organismHost>
<organismHost>
    <name type="scientific">Pan troglodytes</name>
    <name type="common">Chimpanzee</name>
    <dbReference type="NCBI Taxonomy" id="9598"/>
</organismHost>
<gene>
    <name evidence="2" type="primary">C</name>
</gene>
<reference key="1">
    <citation type="submission" date="1990-02" db="EMBL/GenBank/DDBJ databases">
        <authorList>
            <person name="Koechel H.G."/>
            <person name="Schueler A."/>
            <person name="Lottmann S."/>
            <person name="Thomssen R."/>
        </authorList>
    </citation>
    <scope>NUCLEOTIDE SEQUENCE [GENOMIC DNA]</scope>
</reference>
<evidence type="ECO:0000250" key="1"/>
<evidence type="ECO:0000255" key="2">
    <source>
        <dbReference type="HAMAP-Rule" id="MF_04076"/>
    </source>
</evidence>
<evidence type="ECO:0000256" key="3">
    <source>
        <dbReference type="SAM" id="MobiDB-lite"/>
    </source>
</evidence>
<name>HBEAG_HBVA4</name>
<feature type="signal peptide" evidence="2">
    <location>
        <begin position="1"/>
        <end position="19"/>
    </location>
</feature>
<feature type="chain" id="PRO_0000222319" description="External core antigen" evidence="2">
    <location>
        <begin position="20"/>
        <end position="214"/>
    </location>
</feature>
<feature type="propeptide" id="PRO_0000324692" evidence="1">
    <location>
        <begin position="186"/>
        <end position="214"/>
    </location>
</feature>
<feature type="repeat" description="1; half-length">
    <location>
        <begin position="186"/>
        <end position="192"/>
    </location>
</feature>
<feature type="repeat" description="2">
    <location>
        <begin position="193"/>
        <end position="200"/>
    </location>
</feature>
<feature type="repeat" description="3">
    <location>
        <begin position="201"/>
        <end position="208"/>
    </location>
</feature>
<feature type="region of interest" description="HBEAG" evidence="2">
    <location>
        <begin position="25"/>
        <end position="27"/>
    </location>
</feature>
<feature type="region of interest" description="Disordered" evidence="3">
    <location>
        <begin position="165"/>
        <end position="214"/>
    </location>
</feature>
<feature type="region of interest" description="3 X 8 AA repeats of S-P-R-R-R-R-S-Q">
    <location>
        <begin position="186"/>
        <end position="208"/>
    </location>
</feature>
<feature type="compositionally biased region" description="Basic residues" evidence="3">
    <location>
        <begin position="178"/>
        <end position="207"/>
    </location>
</feature>
<feature type="site" description="Cleavage; by host" evidence="2">
    <location>
        <begin position="185"/>
        <end position="186"/>
    </location>
</feature>
<feature type="disulfide bond" description="Interchain" evidence="2">
    <location>
        <position position="77"/>
    </location>
</feature>
<feature type="disulfide bond" description="Interchain" evidence="2">
    <location>
        <position position="90"/>
    </location>
</feature>
<protein>
    <recommendedName>
        <fullName evidence="2">External core antigen</fullName>
    </recommendedName>
    <alternativeName>
        <fullName evidence="2">HBeAg</fullName>
    </alternativeName>
    <alternativeName>
        <fullName evidence="2">Precore protein</fullName>
    </alternativeName>
    <alternativeName>
        <fullName evidence="2">p25</fullName>
    </alternativeName>
</protein>
<proteinExistence type="inferred from homology"/>